<feature type="chain" id="PRO_1000166826" description="Large ribosomal subunit protein uL6">
    <location>
        <begin position="1"/>
        <end position="179"/>
    </location>
</feature>
<keyword id="KW-0687">Ribonucleoprotein</keyword>
<keyword id="KW-0689">Ribosomal protein</keyword>
<keyword id="KW-0694">RNA-binding</keyword>
<keyword id="KW-0699">rRNA-binding</keyword>
<sequence>MSRIGKIPVTVPGGVDVSIDGQDVTVKGPKGTLALTISEPIVIAKNDDGTLSVTRPDDERRSRALHGLSRTLVQNLITGVTDGYTTKMEIHGVGYRVALKGKDLEFALGYSHPVPIEAPEGITFAVESPTKFSVSGIDKQKVGQISANIRRLRRPDPYKGKGVRYEGEQIRRKVGKTGK</sequence>
<name>RL6_RHOOB</name>
<gene>
    <name evidence="1" type="primary">rplF</name>
    <name type="ordered locus">ROP_62010</name>
</gene>
<proteinExistence type="inferred from homology"/>
<comment type="function">
    <text evidence="1">This protein binds to the 23S rRNA, and is important in its secondary structure. It is located near the subunit interface in the base of the L7/L12 stalk, and near the tRNA binding site of the peptidyltransferase center.</text>
</comment>
<comment type="subunit">
    <text evidence="1">Part of the 50S ribosomal subunit.</text>
</comment>
<comment type="similarity">
    <text evidence="1">Belongs to the universal ribosomal protein uL6 family.</text>
</comment>
<organism>
    <name type="scientific">Rhodococcus opacus (strain B4)</name>
    <dbReference type="NCBI Taxonomy" id="632772"/>
    <lineage>
        <taxon>Bacteria</taxon>
        <taxon>Bacillati</taxon>
        <taxon>Actinomycetota</taxon>
        <taxon>Actinomycetes</taxon>
        <taxon>Mycobacteriales</taxon>
        <taxon>Nocardiaceae</taxon>
        <taxon>Rhodococcus</taxon>
    </lineage>
</organism>
<reference key="1">
    <citation type="submission" date="2009-03" db="EMBL/GenBank/DDBJ databases">
        <title>Comparison of the complete genome sequences of Rhodococcus erythropolis PR4 and Rhodococcus opacus B4.</title>
        <authorList>
            <person name="Takarada H."/>
            <person name="Sekine M."/>
            <person name="Hosoyama A."/>
            <person name="Yamada R."/>
            <person name="Fujisawa T."/>
            <person name="Omata S."/>
            <person name="Shimizu A."/>
            <person name="Tsukatani N."/>
            <person name="Tanikawa S."/>
            <person name="Fujita N."/>
            <person name="Harayama S."/>
        </authorList>
    </citation>
    <scope>NUCLEOTIDE SEQUENCE [LARGE SCALE GENOMIC DNA]</scope>
    <source>
        <strain>B4</strain>
    </source>
</reference>
<accession>C1B027</accession>
<protein>
    <recommendedName>
        <fullName evidence="1">Large ribosomal subunit protein uL6</fullName>
    </recommendedName>
    <alternativeName>
        <fullName evidence="2">50S ribosomal protein L6</fullName>
    </alternativeName>
</protein>
<dbReference type="EMBL" id="AP011115">
    <property type="protein sequence ID" value="BAH54448.1"/>
    <property type="molecule type" value="Genomic_DNA"/>
</dbReference>
<dbReference type="RefSeq" id="WP_015889920.1">
    <property type="nucleotide sequence ID" value="NC_012522.1"/>
</dbReference>
<dbReference type="SMR" id="C1B027"/>
<dbReference type="STRING" id="632772.ROP_62010"/>
<dbReference type="KEGG" id="rop:ROP_62010"/>
<dbReference type="PATRIC" id="fig|632772.20.peg.6477"/>
<dbReference type="HOGENOM" id="CLU_065464_1_2_11"/>
<dbReference type="OrthoDB" id="9805007at2"/>
<dbReference type="Proteomes" id="UP000002212">
    <property type="component" value="Chromosome"/>
</dbReference>
<dbReference type="GO" id="GO:0022625">
    <property type="term" value="C:cytosolic large ribosomal subunit"/>
    <property type="evidence" value="ECO:0007669"/>
    <property type="project" value="TreeGrafter"/>
</dbReference>
<dbReference type="GO" id="GO:0019843">
    <property type="term" value="F:rRNA binding"/>
    <property type="evidence" value="ECO:0007669"/>
    <property type="project" value="UniProtKB-UniRule"/>
</dbReference>
<dbReference type="GO" id="GO:0003735">
    <property type="term" value="F:structural constituent of ribosome"/>
    <property type="evidence" value="ECO:0007669"/>
    <property type="project" value="InterPro"/>
</dbReference>
<dbReference type="GO" id="GO:0002181">
    <property type="term" value="P:cytoplasmic translation"/>
    <property type="evidence" value="ECO:0007669"/>
    <property type="project" value="TreeGrafter"/>
</dbReference>
<dbReference type="FunFam" id="3.90.930.12:FF:000001">
    <property type="entry name" value="50S ribosomal protein L6"/>
    <property type="match status" value="1"/>
</dbReference>
<dbReference type="FunFam" id="3.90.930.12:FF:000002">
    <property type="entry name" value="50S ribosomal protein L6"/>
    <property type="match status" value="1"/>
</dbReference>
<dbReference type="Gene3D" id="3.90.930.12">
    <property type="entry name" value="Ribosomal protein L6, alpha-beta domain"/>
    <property type="match status" value="2"/>
</dbReference>
<dbReference type="HAMAP" id="MF_01365_B">
    <property type="entry name" value="Ribosomal_uL6_B"/>
    <property type="match status" value="1"/>
</dbReference>
<dbReference type="InterPro" id="IPR000702">
    <property type="entry name" value="Ribosomal_uL6-like"/>
</dbReference>
<dbReference type="InterPro" id="IPR036789">
    <property type="entry name" value="Ribosomal_uL6-like_a/b-dom_sf"/>
</dbReference>
<dbReference type="InterPro" id="IPR020040">
    <property type="entry name" value="Ribosomal_uL6_a/b-dom"/>
</dbReference>
<dbReference type="InterPro" id="IPR019906">
    <property type="entry name" value="Ribosomal_uL6_bac-type"/>
</dbReference>
<dbReference type="InterPro" id="IPR002358">
    <property type="entry name" value="Ribosomal_uL6_CS"/>
</dbReference>
<dbReference type="NCBIfam" id="TIGR03654">
    <property type="entry name" value="L6_bact"/>
    <property type="match status" value="1"/>
</dbReference>
<dbReference type="PANTHER" id="PTHR11655">
    <property type="entry name" value="60S/50S RIBOSOMAL PROTEIN L6/L9"/>
    <property type="match status" value="1"/>
</dbReference>
<dbReference type="PANTHER" id="PTHR11655:SF14">
    <property type="entry name" value="LARGE RIBOSOMAL SUBUNIT PROTEIN UL6M"/>
    <property type="match status" value="1"/>
</dbReference>
<dbReference type="Pfam" id="PF00347">
    <property type="entry name" value="Ribosomal_L6"/>
    <property type="match status" value="2"/>
</dbReference>
<dbReference type="PIRSF" id="PIRSF002162">
    <property type="entry name" value="Ribosomal_L6"/>
    <property type="match status" value="1"/>
</dbReference>
<dbReference type="PRINTS" id="PR00059">
    <property type="entry name" value="RIBOSOMALL6"/>
</dbReference>
<dbReference type="SUPFAM" id="SSF56053">
    <property type="entry name" value="Ribosomal protein L6"/>
    <property type="match status" value="2"/>
</dbReference>
<dbReference type="PROSITE" id="PS00525">
    <property type="entry name" value="RIBOSOMAL_L6_1"/>
    <property type="match status" value="1"/>
</dbReference>
<evidence type="ECO:0000255" key="1">
    <source>
        <dbReference type="HAMAP-Rule" id="MF_01365"/>
    </source>
</evidence>
<evidence type="ECO:0000305" key="2"/>